<feature type="signal peptide" evidence="1">
    <location>
        <begin position="1"/>
        <end position="21"/>
    </location>
</feature>
<feature type="chain" id="PRO_0000007390" description="Thiol:disulfide interchange protein DsbD">
    <location>
        <begin position="22"/>
        <end position="598"/>
    </location>
</feature>
<feature type="transmembrane region" description="Helical" evidence="1">
    <location>
        <begin position="198"/>
        <end position="220"/>
    </location>
</feature>
<feature type="transmembrane region" description="Helical" evidence="1">
    <location>
        <begin position="240"/>
        <end position="262"/>
    </location>
</feature>
<feature type="transmembrane region" description="Helical" evidence="1">
    <location>
        <begin position="274"/>
        <end position="296"/>
    </location>
</feature>
<feature type="transmembrane region" description="Helical" evidence="1">
    <location>
        <begin position="324"/>
        <end position="346"/>
    </location>
</feature>
<feature type="transmembrane region" description="Helical" evidence="1">
    <location>
        <begin position="353"/>
        <end position="375"/>
    </location>
</feature>
<feature type="transmembrane region" description="Helical" evidence="1">
    <location>
        <begin position="385"/>
        <end position="407"/>
    </location>
</feature>
<feature type="transmembrane region" description="Helical" evidence="1">
    <location>
        <begin position="414"/>
        <end position="431"/>
    </location>
</feature>
<feature type="transmembrane region" description="Helical" evidence="1">
    <location>
        <begin position="446"/>
        <end position="468"/>
    </location>
</feature>
<feature type="domain" description="Thioredoxin" evidence="1">
    <location>
        <begin position="456"/>
        <end position="598"/>
    </location>
</feature>
<feature type="region of interest" description="Disordered" evidence="2">
    <location>
        <begin position="158"/>
        <end position="180"/>
    </location>
</feature>
<feature type="compositionally biased region" description="Polar residues" evidence="2">
    <location>
        <begin position="159"/>
        <end position="180"/>
    </location>
</feature>
<feature type="disulfide bond" description="Redox-active" evidence="1">
    <location>
        <begin position="130"/>
        <end position="136"/>
    </location>
</feature>
<feature type="disulfide bond" description="Redox-active" evidence="1">
    <location>
        <begin position="212"/>
        <end position="333"/>
    </location>
</feature>
<feature type="disulfide bond" description="Redox-active" evidence="1">
    <location>
        <begin position="513"/>
        <end position="516"/>
    </location>
</feature>
<protein>
    <recommendedName>
        <fullName evidence="1">Thiol:disulfide interchange protein DsbD</fullName>
        <ecNumber evidence="1">1.8.1.8</ecNumber>
    </recommendedName>
    <alternativeName>
        <fullName evidence="1">Protein-disulfide reductase</fullName>
        <shortName evidence="1">Disulfide reductase</shortName>
    </alternativeName>
</protein>
<organism>
    <name type="scientific">Vibrio vulnificus (strain YJ016)</name>
    <dbReference type="NCBI Taxonomy" id="196600"/>
    <lineage>
        <taxon>Bacteria</taxon>
        <taxon>Pseudomonadati</taxon>
        <taxon>Pseudomonadota</taxon>
        <taxon>Gammaproteobacteria</taxon>
        <taxon>Vibrionales</taxon>
        <taxon>Vibrionaceae</taxon>
        <taxon>Vibrio</taxon>
    </lineage>
</organism>
<reference key="1">
    <citation type="journal article" date="2003" name="Genome Res.">
        <title>Comparative genome analysis of Vibrio vulnificus, a marine pathogen.</title>
        <authorList>
            <person name="Chen C.-Y."/>
            <person name="Wu K.-M."/>
            <person name="Chang Y.-C."/>
            <person name="Chang C.-H."/>
            <person name="Tsai H.-C."/>
            <person name="Liao T.-L."/>
            <person name="Liu Y.-M."/>
            <person name="Chen H.-J."/>
            <person name="Shen A.B.-T."/>
            <person name="Li J.-C."/>
            <person name="Su T.-L."/>
            <person name="Shao C.-P."/>
            <person name="Lee C.-T."/>
            <person name="Hor L.-I."/>
            <person name="Tsai S.-F."/>
        </authorList>
    </citation>
    <scope>NUCLEOTIDE SEQUENCE [LARGE SCALE GENOMIC DNA]</scope>
    <source>
        <strain>YJ016</strain>
    </source>
</reference>
<keyword id="KW-0997">Cell inner membrane</keyword>
<keyword id="KW-1003">Cell membrane</keyword>
<keyword id="KW-0201">Cytochrome c-type biogenesis</keyword>
<keyword id="KW-1015">Disulfide bond</keyword>
<keyword id="KW-0249">Electron transport</keyword>
<keyword id="KW-0472">Membrane</keyword>
<keyword id="KW-0520">NAD</keyword>
<keyword id="KW-0560">Oxidoreductase</keyword>
<keyword id="KW-0676">Redox-active center</keyword>
<keyword id="KW-0732">Signal</keyword>
<keyword id="KW-0812">Transmembrane</keyword>
<keyword id="KW-1133">Transmembrane helix</keyword>
<keyword id="KW-0813">Transport</keyword>
<sequence length="598" mass="65183">MRALLTFFVAGLLVLSSPAMALFGNNQNSSFASGSNDFVPVDQAFPFNYFQQDHRITLDWQVKEGYYLYQQRLSFSAENVVLGDIQMENGQPYRDEFFGDVNIYTNPLFVNIPMQDWQPGAKLIVQYQGCAKAGFCYPPETRVIDIASFTNGDMAPATMPTQTASPLDTSTANTSTPQPLTQQDQLASGLADNWWTPLLFLALGVGLAFTPCVLPMYPILTSIVLGSGKLSQRRALGLSLVYVQGMALTYTLLGLVVASAGLQFQAAMQHPYVLIGLSILFVTLALSMFGVYTLQLPSSVQTWLNNLSNKQQGGSSTGVFAMGAISGLVCSPCTTAPLSGALLYVAQSGDLLTGGVALYALAMGMGIPLILVAVFGNKLLPKAGGWMDHVKTLFGFVLLAAPIFLLERILPEMWSTALWSALGIAAFGWLYHVKNSLEFGGWKQSAVGIIAVLGLFASAQPALNYWFADSSQQAQTSEVSFIKIRNVEELQQQLALAKQAKKPVMLDFYADWCVACKEFEKYTFHDPAVAAQLKQFVLLQADVTRNQAQDIELLQAQQVLGLPTIDFWDAQGNPVSNARLTGFMQAAPFLEHIQRISN</sequence>
<evidence type="ECO:0000255" key="1">
    <source>
        <dbReference type="HAMAP-Rule" id="MF_00399"/>
    </source>
</evidence>
<evidence type="ECO:0000256" key="2">
    <source>
        <dbReference type="SAM" id="MobiDB-lite"/>
    </source>
</evidence>
<gene>
    <name evidence="1" type="primary">dsbD</name>
    <name type="ordered locus">VV3120</name>
</gene>
<name>DSBD_VIBVY</name>
<proteinExistence type="inferred from homology"/>
<accession>Q7MGV6</accession>
<dbReference type="EC" id="1.8.1.8" evidence="1"/>
<dbReference type="EMBL" id="BA000037">
    <property type="protein sequence ID" value="BAC95884.1"/>
    <property type="molecule type" value="Genomic_DNA"/>
</dbReference>
<dbReference type="RefSeq" id="WP_011151357.1">
    <property type="nucleotide sequence ID" value="NC_005139.1"/>
</dbReference>
<dbReference type="SMR" id="Q7MGV6"/>
<dbReference type="STRING" id="672.VV93_v1c28420"/>
<dbReference type="KEGG" id="vvy:VV3120"/>
<dbReference type="PATRIC" id="fig|196600.6.peg.3094"/>
<dbReference type="eggNOG" id="COG4232">
    <property type="taxonomic scope" value="Bacteria"/>
</dbReference>
<dbReference type="HOGENOM" id="CLU_014657_3_0_6"/>
<dbReference type="Proteomes" id="UP000002675">
    <property type="component" value="Chromosome I"/>
</dbReference>
<dbReference type="GO" id="GO:0005886">
    <property type="term" value="C:plasma membrane"/>
    <property type="evidence" value="ECO:0007669"/>
    <property type="project" value="UniProtKB-SubCell"/>
</dbReference>
<dbReference type="GO" id="GO:0009055">
    <property type="term" value="F:electron transfer activity"/>
    <property type="evidence" value="ECO:0007669"/>
    <property type="project" value="UniProtKB-UniRule"/>
</dbReference>
<dbReference type="GO" id="GO:0047134">
    <property type="term" value="F:protein-disulfide reductase [NAD(P)H] activity"/>
    <property type="evidence" value="ECO:0007669"/>
    <property type="project" value="UniProtKB-UniRule"/>
</dbReference>
<dbReference type="GO" id="GO:0045454">
    <property type="term" value="P:cell redox homeostasis"/>
    <property type="evidence" value="ECO:0007669"/>
    <property type="project" value="TreeGrafter"/>
</dbReference>
<dbReference type="GO" id="GO:0017004">
    <property type="term" value="P:cytochrome complex assembly"/>
    <property type="evidence" value="ECO:0007669"/>
    <property type="project" value="UniProtKB-UniRule"/>
</dbReference>
<dbReference type="CDD" id="cd02953">
    <property type="entry name" value="DsbDgamma"/>
    <property type="match status" value="1"/>
</dbReference>
<dbReference type="FunFam" id="3.40.30.10:FF:000116">
    <property type="entry name" value="Thiol:disulfide interchange protein DsbD"/>
    <property type="match status" value="1"/>
</dbReference>
<dbReference type="Gene3D" id="3.40.30.10">
    <property type="entry name" value="Glutaredoxin"/>
    <property type="match status" value="1"/>
</dbReference>
<dbReference type="Gene3D" id="2.60.40.1250">
    <property type="entry name" value="Thiol:disulfide interchange protein DsbD, N-terminal domain"/>
    <property type="match status" value="1"/>
</dbReference>
<dbReference type="HAMAP" id="MF_00399">
    <property type="entry name" value="DbsD"/>
    <property type="match status" value="1"/>
</dbReference>
<dbReference type="InterPro" id="IPR003834">
    <property type="entry name" value="Cyt_c_assmbl_TM_dom"/>
</dbReference>
<dbReference type="InterPro" id="IPR035671">
    <property type="entry name" value="DsbD_gamma"/>
</dbReference>
<dbReference type="InterPro" id="IPR028250">
    <property type="entry name" value="DsbDN"/>
</dbReference>
<dbReference type="InterPro" id="IPR036929">
    <property type="entry name" value="DsbDN_sf"/>
</dbReference>
<dbReference type="InterPro" id="IPR022910">
    <property type="entry name" value="Thiol_diS_interchange_DbsD"/>
</dbReference>
<dbReference type="InterPro" id="IPR036249">
    <property type="entry name" value="Thioredoxin-like_sf"/>
</dbReference>
<dbReference type="InterPro" id="IPR017937">
    <property type="entry name" value="Thioredoxin_CS"/>
</dbReference>
<dbReference type="InterPro" id="IPR013766">
    <property type="entry name" value="Thioredoxin_domain"/>
</dbReference>
<dbReference type="NCBIfam" id="NF001419">
    <property type="entry name" value="PRK00293.1"/>
    <property type="match status" value="1"/>
</dbReference>
<dbReference type="PANTHER" id="PTHR32234">
    <property type="entry name" value="THIOL:DISULFIDE INTERCHANGE PROTEIN DSBD"/>
    <property type="match status" value="1"/>
</dbReference>
<dbReference type="PANTHER" id="PTHR32234:SF0">
    <property type="entry name" value="THIOL:DISULFIDE INTERCHANGE PROTEIN DSBD"/>
    <property type="match status" value="1"/>
</dbReference>
<dbReference type="Pfam" id="PF11412">
    <property type="entry name" value="DsbD_N"/>
    <property type="match status" value="1"/>
</dbReference>
<dbReference type="Pfam" id="PF02683">
    <property type="entry name" value="DsbD_TM"/>
    <property type="match status" value="1"/>
</dbReference>
<dbReference type="Pfam" id="PF13899">
    <property type="entry name" value="Thioredoxin_7"/>
    <property type="match status" value="1"/>
</dbReference>
<dbReference type="SUPFAM" id="SSF74863">
    <property type="entry name" value="Thiol:disulfide interchange protein DsbD, N-terminal domain (DsbD-alpha)"/>
    <property type="match status" value="1"/>
</dbReference>
<dbReference type="SUPFAM" id="SSF52833">
    <property type="entry name" value="Thioredoxin-like"/>
    <property type="match status" value="1"/>
</dbReference>
<dbReference type="PROSITE" id="PS00194">
    <property type="entry name" value="THIOREDOXIN_1"/>
    <property type="match status" value="1"/>
</dbReference>
<dbReference type="PROSITE" id="PS51352">
    <property type="entry name" value="THIOREDOXIN_2"/>
    <property type="match status" value="1"/>
</dbReference>
<comment type="function">
    <text evidence="1">Required to facilitate the formation of correct disulfide bonds in some periplasmic proteins and for the assembly of the periplasmic c-type cytochromes. Acts by transferring electrons from cytoplasmic thioredoxin to the periplasm. This transfer involves a cascade of disulfide bond formation and reduction steps.</text>
</comment>
<comment type="catalytic activity">
    <reaction evidence="1">
        <text>[protein]-dithiol + NAD(+) = [protein]-disulfide + NADH + H(+)</text>
        <dbReference type="Rhea" id="RHEA:18749"/>
        <dbReference type="Rhea" id="RHEA-COMP:10593"/>
        <dbReference type="Rhea" id="RHEA-COMP:10594"/>
        <dbReference type="ChEBI" id="CHEBI:15378"/>
        <dbReference type="ChEBI" id="CHEBI:29950"/>
        <dbReference type="ChEBI" id="CHEBI:50058"/>
        <dbReference type="ChEBI" id="CHEBI:57540"/>
        <dbReference type="ChEBI" id="CHEBI:57945"/>
        <dbReference type="EC" id="1.8.1.8"/>
    </reaction>
</comment>
<comment type="catalytic activity">
    <reaction evidence="1">
        <text>[protein]-dithiol + NADP(+) = [protein]-disulfide + NADPH + H(+)</text>
        <dbReference type="Rhea" id="RHEA:18753"/>
        <dbReference type="Rhea" id="RHEA-COMP:10593"/>
        <dbReference type="Rhea" id="RHEA-COMP:10594"/>
        <dbReference type="ChEBI" id="CHEBI:15378"/>
        <dbReference type="ChEBI" id="CHEBI:29950"/>
        <dbReference type="ChEBI" id="CHEBI:50058"/>
        <dbReference type="ChEBI" id="CHEBI:57783"/>
        <dbReference type="ChEBI" id="CHEBI:58349"/>
        <dbReference type="EC" id="1.8.1.8"/>
    </reaction>
</comment>
<comment type="subcellular location">
    <subcellularLocation>
        <location evidence="1">Cell inner membrane</location>
        <topology evidence="1">Multi-pass membrane protein</topology>
    </subcellularLocation>
</comment>
<comment type="similarity">
    <text evidence="1">Belongs to the thioredoxin family. DsbD subfamily.</text>
</comment>